<dbReference type="PIR" id="S06502">
    <property type="entry name" value="HANK2"/>
</dbReference>
<dbReference type="SMR" id="P14394"/>
<dbReference type="GO" id="GO:0020037">
    <property type="term" value="F:heme binding"/>
    <property type="evidence" value="ECO:0007669"/>
    <property type="project" value="InterPro"/>
</dbReference>
<dbReference type="GO" id="GO:0046872">
    <property type="term" value="F:metal ion binding"/>
    <property type="evidence" value="ECO:0007669"/>
    <property type="project" value="UniProtKB-KW"/>
</dbReference>
<dbReference type="GO" id="GO:0019825">
    <property type="term" value="F:oxygen binding"/>
    <property type="evidence" value="ECO:0007669"/>
    <property type="project" value="InterPro"/>
</dbReference>
<dbReference type="GO" id="GO:0005344">
    <property type="term" value="F:oxygen carrier activity"/>
    <property type="evidence" value="ECO:0007669"/>
    <property type="project" value="UniProtKB-KW"/>
</dbReference>
<dbReference type="CDD" id="cd01040">
    <property type="entry name" value="Mb-like"/>
    <property type="match status" value="1"/>
</dbReference>
<dbReference type="Gene3D" id="1.10.490.10">
    <property type="entry name" value="Globins"/>
    <property type="match status" value="1"/>
</dbReference>
<dbReference type="InterPro" id="IPR000971">
    <property type="entry name" value="Globin"/>
</dbReference>
<dbReference type="InterPro" id="IPR050532">
    <property type="entry name" value="Globin-like_OT"/>
</dbReference>
<dbReference type="InterPro" id="IPR009050">
    <property type="entry name" value="Globin-like_sf"/>
</dbReference>
<dbReference type="InterPro" id="IPR012292">
    <property type="entry name" value="Globin/Proto"/>
</dbReference>
<dbReference type="InterPro" id="IPR044399">
    <property type="entry name" value="Mb-like_M"/>
</dbReference>
<dbReference type="PANTHER" id="PTHR46458">
    <property type="entry name" value="BLR2807 PROTEIN"/>
    <property type="match status" value="1"/>
</dbReference>
<dbReference type="PANTHER" id="PTHR46458:SF1">
    <property type="entry name" value="GEO09476P1"/>
    <property type="match status" value="1"/>
</dbReference>
<dbReference type="Pfam" id="PF00042">
    <property type="entry name" value="Globin"/>
    <property type="match status" value="1"/>
</dbReference>
<dbReference type="SUPFAM" id="SSF46458">
    <property type="entry name" value="Globin-like"/>
    <property type="match status" value="1"/>
</dbReference>
<dbReference type="PROSITE" id="PS01033">
    <property type="entry name" value="GLOBIN"/>
    <property type="match status" value="1"/>
</dbReference>
<comment type="subunit">
    <text>Homodimer.</text>
</comment>
<comment type="similarity">
    <text evidence="1">Belongs to the globin family.</text>
</comment>
<keyword id="KW-0903">Direct protein sequencing</keyword>
<keyword id="KW-0349">Heme</keyword>
<keyword id="KW-0408">Iron</keyword>
<keyword id="KW-0479">Metal-binding</keyword>
<keyword id="KW-0561">Oxygen transport</keyword>
<keyword id="KW-0813">Transport</keyword>
<organism>
    <name type="scientific">Anadara trapezia</name>
    <name type="common">Sydney cockle</name>
    <name type="synonym">Arca trapezia</name>
    <dbReference type="NCBI Taxonomy" id="6556"/>
    <lineage>
        <taxon>Eukaryota</taxon>
        <taxon>Metazoa</taxon>
        <taxon>Spiralia</taxon>
        <taxon>Lophotrochozoa</taxon>
        <taxon>Mollusca</taxon>
        <taxon>Bivalvia</taxon>
        <taxon>Autobranchia</taxon>
        <taxon>Pteriomorphia</taxon>
        <taxon>Arcoida</taxon>
        <taxon>Arcoidea</taxon>
        <taxon>Arcidae</taxon>
        <taxon>Anadara</taxon>
    </lineage>
</organism>
<name>GLB2_ANATR</name>
<reference key="1">
    <citation type="journal article" date="1984" name="Aust. J. Biol. Sci.">
        <title>Amino acid sequence of the globin IIB chain of the dimeric haemoglobin of the bivalve mollusc Andara trapezia.</title>
        <authorList>
            <person name="Fisher W.K."/>
            <person name="Gilbert A.T."/>
            <person name="Thompson E.O.P."/>
        </authorList>
    </citation>
    <scope>PROTEIN SEQUENCE</scope>
</reference>
<reference key="2">
    <citation type="journal article" date="1986" name="Aust. J. Biol. Sci.">
        <title>Genetic variation of the dimeric haemoglobin of the bivalve mollusc Anadara trapezia.</title>
        <authorList>
            <person name="Mann R.G."/>
            <person name="Fisher W.K."/>
            <person name="Gilbert A.T."/>
            <person name="Thompson E.O.P."/>
        </authorList>
    </citation>
    <scope>VARIANT ASP-64</scope>
</reference>
<evidence type="ECO:0000255" key="1">
    <source>
        <dbReference type="PROSITE-ProRule" id="PRU00238"/>
    </source>
</evidence>
<evidence type="ECO:0000269" key="2">
    <source ref="2"/>
</evidence>
<proteinExistence type="evidence at protein level"/>
<protein>
    <recommendedName>
        <fullName>Globin-2B</fullName>
    </recommendedName>
    <alternativeName>
        <fullName>Globin IIB</fullName>
    </alternativeName>
</protein>
<feature type="chain" id="PRO_0000052483" description="Globin-2B">
    <location>
        <begin position="1"/>
        <end position="146"/>
    </location>
</feature>
<feature type="domain" description="Globin" evidence="1">
    <location>
        <begin position="9"/>
        <end position="146"/>
    </location>
</feature>
<feature type="binding site" description="proximal binding residue" evidence="1">
    <location>
        <position position="101"/>
    </location>
    <ligand>
        <name>heme b</name>
        <dbReference type="ChEBI" id="CHEBI:60344"/>
    </ligand>
    <ligandPart>
        <name>Fe</name>
        <dbReference type="ChEBI" id="CHEBI:18248"/>
    </ligandPart>
</feature>
<feature type="sequence variant" description="In globin-2A." evidence="2">
    <original>S</original>
    <variation>D</variation>
    <location>
        <position position="64"/>
    </location>
</feature>
<accession>P14394</accession>
<sequence length="146" mass="15995">PSVQDAAAQLTADVKKDLRDSWKVLGSDKKGDGMALMTTLFNDHQETIAYFKRMGDVSQGMANSKLRGHSITLMYALQNFIDQLDSTDDLICVVEKFAVNHITRKISGAEFGKINGPMKKVLASKNFGDKYANAWAKLVGVVQAAL</sequence>